<reference key="1">
    <citation type="journal article" date="2010" name="J. Clin. Microbiol.">
        <title>Emergence of a new multidrug-resistant serotype X variant in an epidemic clone of Shigella flexneri.</title>
        <authorList>
            <person name="Ye C."/>
            <person name="Lan R."/>
            <person name="Xia S."/>
            <person name="Zhang J."/>
            <person name="Sun Q."/>
            <person name="Zhang S."/>
            <person name="Jing H."/>
            <person name="Wang L."/>
            <person name="Li Z."/>
            <person name="Zhou Z."/>
            <person name="Zhao A."/>
            <person name="Cui Z."/>
            <person name="Cao J."/>
            <person name="Jin D."/>
            <person name="Huang L."/>
            <person name="Wang Y."/>
            <person name="Luo X."/>
            <person name="Bai X."/>
            <person name="Wang Y."/>
            <person name="Wang P."/>
            <person name="Xu Q."/>
            <person name="Xu J."/>
        </authorList>
    </citation>
    <scope>NUCLEOTIDE SEQUENCE [LARGE SCALE GENOMIC DNA]</scope>
    <source>
        <strain>2002017</strain>
    </source>
</reference>
<keyword id="KW-0418">Kinase</keyword>
<keyword id="KW-0597">Phosphoprotein</keyword>
<keyword id="KW-0614">Plasmid</keyword>
<keyword id="KW-0964">Secreted</keyword>
<keyword id="KW-0808">Transferase</keyword>
<keyword id="KW-0843">Virulence</keyword>
<protein>
    <recommendedName>
        <fullName>Protein kinase OspG</fullName>
        <ecNumber>2.7.-.-</ecNumber>
    </recommendedName>
    <alternativeName>
        <fullName>Effector protein OspG</fullName>
    </alternativeName>
</protein>
<gene>
    <name type="primary">ospG</name>
    <name type="ordered locus">SFxv_5079</name>
</gene>
<proteinExistence type="inferred from homology"/>
<geneLocation type="plasmid">
    <name>pSFxv_1</name>
</geneLocation>
<name>OSPG_SHIF2</name>
<evidence type="ECO:0000250" key="1"/>
<evidence type="ECO:0000305" key="2"/>
<sequence>MKITSTIIQTPFPFENNNSHAGIVTEPILGKLIGQGSTAEIFEDVNDSSALYKKYDLIGNQYNEILEMAWQESELFNAFYGDEASVVIQYGGDVYLRMLRVPGTPLSDIDTADIPDNIESLYLQLICKLNELSIIHYDLNTGNMLYDKESESLFPIDFRNIYAEYYAATKKDKEIIDRRLQMRTNDFYSLLNRKYL</sequence>
<organism>
    <name type="scientific">Shigella flexneri serotype X (strain 2002017)</name>
    <dbReference type="NCBI Taxonomy" id="591020"/>
    <lineage>
        <taxon>Bacteria</taxon>
        <taxon>Pseudomonadati</taxon>
        <taxon>Pseudomonadota</taxon>
        <taxon>Gammaproteobacteria</taxon>
        <taxon>Enterobacterales</taxon>
        <taxon>Enterobacteriaceae</taxon>
        <taxon>Shigella</taxon>
    </lineage>
</organism>
<comment type="function">
    <text evidence="1">Effector proteins function to alter host cell physiology and promote bacterial survival in host tissues. This protein is a kinase that is involved in down-regulation of the host innate response induced by invasive bacteria (By similarity).</text>
</comment>
<comment type="subcellular location">
    <subcellularLocation>
        <location evidence="1">Secreted</location>
    </subcellularLocation>
    <subcellularLocation>
        <location evidence="1">Host cell</location>
    </subcellularLocation>
    <text evidence="1">Secreted via Mxi-Spa type III secretion system (T3SS), and delivered into the host cell.</text>
</comment>
<comment type="PTM">
    <text evidence="1">Autophosphorylated.</text>
</comment>
<comment type="similarity">
    <text evidence="2">Belongs to the protein kinase superfamily.</text>
</comment>
<accession>D2AJU3</accession>
<feature type="chain" id="PRO_0000395879" description="Protein kinase OspG">
    <location>
        <begin position="1"/>
        <end position="196"/>
    </location>
</feature>
<dbReference type="EC" id="2.7.-.-"/>
<dbReference type="EMBL" id="CP001384">
    <property type="protein sequence ID" value="ADA76974.1"/>
    <property type="molecule type" value="Genomic_DNA"/>
</dbReference>
<dbReference type="RefSeq" id="WP_000705601.1">
    <property type="nucleotide sequence ID" value="NC_017319.1"/>
</dbReference>
<dbReference type="SMR" id="D2AJU3"/>
<dbReference type="KEGG" id="sfe:SFxv_5079"/>
<dbReference type="PATRIC" id="fig|591020.3.peg.5450"/>
<dbReference type="HOGENOM" id="CLU_120872_0_0_6"/>
<dbReference type="GO" id="GO:0005615">
    <property type="term" value="C:extracellular space"/>
    <property type="evidence" value="ECO:0000250"/>
    <property type="project" value="UniProtKB"/>
</dbReference>
<dbReference type="GO" id="GO:0043657">
    <property type="term" value="C:host cell"/>
    <property type="evidence" value="ECO:0007669"/>
    <property type="project" value="UniProtKB-SubCell"/>
</dbReference>
<dbReference type="GO" id="GO:0016301">
    <property type="term" value="F:kinase activity"/>
    <property type="evidence" value="ECO:0000250"/>
    <property type="project" value="UniProtKB"/>
</dbReference>
<dbReference type="GO" id="GO:0046777">
    <property type="term" value="P:protein autophosphorylation"/>
    <property type="evidence" value="ECO:0000250"/>
    <property type="project" value="UniProtKB"/>
</dbReference>
<dbReference type="Gene3D" id="3.30.200.20">
    <property type="entry name" value="Phosphorylase Kinase, domain 1"/>
    <property type="match status" value="1"/>
</dbReference>
<dbReference type="Gene3D" id="1.10.510.10">
    <property type="entry name" value="Transferase(Phosphotransferase) domain 1"/>
    <property type="match status" value="1"/>
</dbReference>
<dbReference type="InterPro" id="IPR011009">
    <property type="entry name" value="Kinase-like_dom_sf"/>
</dbReference>
<dbReference type="InterPro" id="IPR054466">
    <property type="entry name" value="OspG_kinase"/>
</dbReference>
<dbReference type="Pfam" id="PF22303">
    <property type="entry name" value="OspG_kinase"/>
    <property type="match status" value="1"/>
</dbReference>
<dbReference type="SUPFAM" id="SSF56112">
    <property type="entry name" value="Protein kinase-like (PK-like)"/>
    <property type="match status" value="1"/>
</dbReference>